<protein>
    <recommendedName>
        <fullName>Dihydroorotate dehydrogenase (fumarate)</fullName>
        <shortName>DHOD</shortName>
        <shortName>DHODase</shortName>
        <shortName>DHOdehase</shortName>
        <ecNumber>1.3.98.1</ecNumber>
    </recommendedName>
    <alternativeName>
        <fullName>Dihydroorotate oxidase</fullName>
    </alternativeName>
</protein>
<sequence length="315" mass="34989">MKPSLQVEFCGHIYENPLMNASGVCCMTTNELDDMARSSSGAFITKSATSMERDGNPEPRYVSVPLGSINSMGLPNKGIDYYLDYVLDRQDRFPSENPPFMSVAGMSIDENIKLLHRIQDSNFRGITELNLSCPNVPGKPQVAYDFELTDQILSSVFEFFTKPLGVKLPPYFDFAHFDAMACILNKYPIAYVNCINSVGNGLYIDVEKESVVIKPKDGFGGIGGEYIKPTALANVRAFYNRLNGRIRIIGTGGIKTGQDAFEHLLCGATMLQIGTELQNEGTEIFERINAELLQILEQKGYQSIEDFRGKLRSIS</sequence>
<name>PYRD1_KLULA</name>
<proteinExistence type="inferred from homology"/>
<dbReference type="EC" id="1.3.98.1"/>
<dbReference type="EMBL" id="AY323896">
    <property type="protein sequence ID" value="AAQ01773.1"/>
    <property type="molecule type" value="Genomic_DNA"/>
</dbReference>
<dbReference type="EMBL" id="CR382123">
    <property type="protein sequence ID" value="CAH01915.1"/>
    <property type="molecule type" value="Genomic_DNA"/>
</dbReference>
<dbReference type="RefSeq" id="XP_453064.1">
    <property type="nucleotide sequence ID" value="XM_453064.1"/>
</dbReference>
<dbReference type="SMR" id="Q7Z895"/>
<dbReference type="FunCoup" id="Q7Z895">
    <property type="interactions" value="738"/>
</dbReference>
<dbReference type="STRING" id="284590.Q7Z895"/>
<dbReference type="PaxDb" id="284590-Q7Z895"/>
<dbReference type="KEGG" id="kla:KLLA0_C19360g"/>
<dbReference type="eggNOG" id="KOG1436">
    <property type="taxonomic scope" value="Eukaryota"/>
</dbReference>
<dbReference type="HOGENOM" id="CLU_042042_3_0_1"/>
<dbReference type="InParanoid" id="Q7Z895"/>
<dbReference type="OMA" id="FDFAHFD"/>
<dbReference type="UniPathway" id="UPA00070"/>
<dbReference type="Proteomes" id="UP000000598">
    <property type="component" value="Chromosome C"/>
</dbReference>
<dbReference type="GO" id="GO:0005737">
    <property type="term" value="C:cytoplasm"/>
    <property type="evidence" value="ECO:0007669"/>
    <property type="project" value="UniProtKB-SubCell"/>
</dbReference>
<dbReference type="GO" id="GO:1990663">
    <property type="term" value="F:dihydroorotate dehydrogenase (fumarate) activity"/>
    <property type="evidence" value="ECO:0007669"/>
    <property type="project" value="UniProtKB-EC"/>
</dbReference>
<dbReference type="GO" id="GO:0006207">
    <property type="term" value="P:'de novo' pyrimidine nucleobase biosynthetic process"/>
    <property type="evidence" value="ECO:0007669"/>
    <property type="project" value="InterPro"/>
</dbReference>
<dbReference type="GO" id="GO:0044205">
    <property type="term" value="P:'de novo' UMP biosynthetic process"/>
    <property type="evidence" value="ECO:0007669"/>
    <property type="project" value="UniProtKB-UniPathway"/>
</dbReference>
<dbReference type="CDD" id="cd04741">
    <property type="entry name" value="DHOD_1A_like"/>
    <property type="match status" value="1"/>
</dbReference>
<dbReference type="FunFam" id="3.20.20.70:FF:000027">
    <property type="entry name" value="Dihydropyrimidine dehydrogenase [NADP(+)]"/>
    <property type="match status" value="1"/>
</dbReference>
<dbReference type="Gene3D" id="3.20.20.70">
    <property type="entry name" value="Aldolase class I"/>
    <property type="match status" value="1"/>
</dbReference>
<dbReference type="Gene3D" id="2.30.26.10">
    <property type="entry name" value="Dihydroorotate Dehydrogenase A, chain A, domain 2"/>
    <property type="match status" value="1"/>
</dbReference>
<dbReference type="HAMAP" id="MF_00224">
    <property type="entry name" value="DHO_dh_type1"/>
    <property type="match status" value="1"/>
</dbReference>
<dbReference type="InterPro" id="IPR013785">
    <property type="entry name" value="Aldolase_TIM"/>
</dbReference>
<dbReference type="InterPro" id="IPR050074">
    <property type="entry name" value="DHO_dehydrogenase"/>
</dbReference>
<dbReference type="InterPro" id="IPR033886">
    <property type="entry name" value="DHOD_1A"/>
</dbReference>
<dbReference type="InterPro" id="IPR023359">
    <property type="entry name" value="Dihydro_DH_chainA_dom2"/>
</dbReference>
<dbReference type="InterPro" id="IPR024920">
    <property type="entry name" value="Dihydroorotate_DH_1"/>
</dbReference>
<dbReference type="InterPro" id="IPR012135">
    <property type="entry name" value="Dihydroorotate_DH_1_2"/>
</dbReference>
<dbReference type="InterPro" id="IPR005720">
    <property type="entry name" value="Dihydroorotate_DH_cat"/>
</dbReference>
<dbReference type="InterPro" id="IPR001295">
    <property type="entry name" value="Dihydroorotate_DH_CS"/>
</dbReference>
<dbReference type="NCBIfam" id="NF002702">
    <property type="entry name" value="PRK02506.1"/>
    <property type="match status" value="1"/>
</dbReference>
<dbReference type="PANTHER" id="PTHR48109:SF1">
    <property type="entry name" value="DIHYDROOROTATE DEHYDROGENASE (FUMARATE)"/>
    <property type="match status" value="1"/>
</dbReference>
<dbReference type="PANTHER" id="PTHR48109">
    <property type="entry name" value="DIHYDROOROTATE DEHYDROGENASE (QUINONE), MITOCHONDRIAL-RELATED"/>
    <property type="match status" value="1"/>
</dbReference>
<dbReference type="Pfam" id="PF01180">
    <property type="entry name" value="DHO_dh"/>
    <property type="match status" value="1"/>
</dbReference>
<dbReference type="PIRSF" id="PIRSF000164">
    <property type="entry name" value="DHO_oxidase"/>
    <property type="match status" value="1"/>
</dbReference>
<dbReference type="SUPFAM" id="SSF51395">
    <property type="entry name" value="FMN-linked oxidoreductases"/>
    <property type="match status" value="1"/>
</dbReference>
<dbReference type="PROSITE" id="PS00911">
    <property type="entry name" value="DHODEHASE_1"/>
    <property type="match status" value="1"/>
</dbReference>
<dbReference type="PROSITE" id="PS00912">
    <property type="entry name" value="DHODEHASE_2"/>
    <property type="match status" value="1"/>
</dbReference>
<organism>
    <name type="scientific">Kluyveromyces lactis (strain ATCC 8585 / CBS 2359 / DSM 70799 / NBRC 1267 / NRRL Y-1140 / WM37)</name>
    <name type="common">Yeast</name>
    <name type="synonym">Candida sphaerica</name>
    <dbReference type="NCBI Taxonomy" id="284590"/>
    <lineage>
        <taxon>Eukaryota</taxon>
        <taxon>Fungi</taxon>
        <taxon>Dikarya</taxon>
        <taxon>Ascomycota</taxon>
        <taxon>Saccharomycotina</taxon>
        <taxon>Saccharomycetes</taxon>
        <taxon>Saccharomycetales</taxon>
        <taxon>Saccharomycetaceae</taxon>
        <taxon>Kluyveromyces</taxon>
    </lineage>
</organism>
<comment type="function">
    <text evidence="1">Catalyzes the conversion of dihydroorotate to orotate with fumarate as the electron acceptor.</text>
</comment>
<comment type="catalytic activity">
    <reaction>
        <text>(S)-dihydroorotate + fumarate = orotate + succinate</text>
        <dbReference type="Rhea" id="RHEA:30059"/>
        <dbReference type="ChEBI" id="CHEBI:29806"/>
        <dbReference type="ChEBI" id="CHEBI:30031"/>
        <dbReference type="ChEBI" id="CHEBI:30839"/>
        <dbReference type="ChEBI" id="CHEBI:30864"/>
        <dbReference type="EC" id="1.3.98.1"/>
    </reaction>
</comment>
<comment type="cofactor">
    <cofactor evidence="1">
        <name>FMN</name>
        <dbReference type="ChEBI" id="CHEBI:58210"/>
    </cofactor>
    <text evidence="1">Binds 1 FMN per subunit.</text>
</comment>
<comment type="pathway">
    <text>Pyrimidine metabolism; UMP biosynthesis via de novo pathway.</text>
</comment>
<comment type="subunit">
    <text evidence="1">Homodimer.</text>
</comment>
<comment type="subcellular location">
    <subcellularLocation>
        <location evidence="1">Cytoplasm</location>
    </subcellularLocation>
</comment>
<comment type="miscellaneous">
    <text>K.lactis has two isoforms of DHODase, a cytoplasmic isoform and a mitochondrial isoform.</text>
</comment>
<comment type="similarity">
    <text evidence="2">Belongs to the dihydroorotate dehydrogenase family. Type 1 subfamily.</text>
</comment>
<reference key="1">
    <citation type="journal article" date="2005" name="Eukaryot. Cell">
        <title>Contribution of horizontal gene transfer to the evolution of Saccharomyces cerevisiae.</title>
        <authorList>
            <person name="Hall C.R."/>
            <person name="Brachat S."/>
            <person name="Dietrich F.S."/>
        </authorList>
    </citation>
    <scope>NUCLEOTIDE SEQUENCE [GENOMIC DNA]</scope>
    <source>
        <strain>ATCC 200962 / CBS 141 / JCM 9563 / NBRC 0648 / NCTC 1303 / HA 714</strain>
    </source>
</reference>
<reference key="2">
    <citation type="journal article" date="2004" name="Nature">
        <title>Genome evolution in yeasts.</title>
        <authorList>
            <person name="Dujon B."/>
            <person name="Sherman D."/>
            <person name="Fischer G."/>
            <person name="Durrens P."/>
            <person name="Casaregola S."/>
            <person name="Lafontaine I."/>
            <person name="de Montigny J."/>
            <person name="Marck C."/>
            <person name="Neuveglise C."/>
            <person name="Talla E."/>
            <person name="Goffard N."/>
            <person name="Frangeul L."/>
            <person name="Aigle M."/>
            <person name="Anthouard V."/>
            <person name="Babour A."/>
            <person name="Barbe V."/>
            <person name="Barnay S."/>
            <person name="Blanchin S."/>
            <person name="Beckerich J.-M."/>
            <person name="Beyne E."/>
            <person name="Bleykasten C."/>
            <person name="Boisrame A."/>
            <person name="Boyer J."/>
            <person name="Cattolico L."/>
            <person name="Confanioleri F."/>
            <person name="de Daruvar A."/>
            <person name="Despons L."/>
            <person name="Fabre E."/>
            <person name="Fairhead C."/>
            <person name="Ferry-Dumazet H."/>
            <person name="Groppi A."/>
            <person name="Hantraye F."/>
            <person name="Hennequin C."/>
            <person name="Jauniaux N."/>
            <person name="Joyet P."/>
            <person name="Kachouri R."/>
            <person name="Kerrest A."/>
            <person name="Koszul R."/>
            <person name="Lemaire M."/>
            <person name="Lesur I."/>
            <person name="Ma L."/>
            <person name="Muller H."/>
            <person name="Nicaud J.-M."/>
            <person name="Nikolski M."/>
            <person name="Oztas S."/>
            <person name="Ozier-Kalogeropoulos O."/>
            <person name="Pellenz S."/>
            <person name="Potier S."/>
            <person name="Richard G.-F."/>
            <person name="Straub M.-L."/>
            <person name="Suleau A."/>
            <person name="Swennen D."/>
            <person name="Tekaia F."/>
            <person name="Wesolowski-Louvel M."/>
            <person name="Westhof E."/>
            <person name="Wirth B."/>
            <person name="Zeniou-Meyer M."/>
            <person name="Zivanovic Y."/>
            <person name="Bolotin-Fukuhara M."/>
            <person name="Thierry A."/>
            <person name="Bouchier C."/>
            <person name="Caudron B."/>
            <person name="Scarpelli C."/>
            <person name="Gaillardin C."/>
            <person name="Weissenbach J."/>
            <person name="Wincker P."/>
            <person name="Souciet J.-L."/>
        </authorList>
    </citation>
    <scope>NUCLEOTIDE SEQUENCE [LARGE SCALE GENOMIC DNA]</scope>
    <source>
        <strain>ATCC 8585 / CBS 2359 / DSM 70799 / NBRC 1267 / NRRL Y-1140 / WM37</strain>
    </source>
</reference>
<feature type="chain" id="PRO_0000148500" description="Dihydroorotate dehydrogenase (fumarate)">
    <location>
        <begin position="1"/>
        <end position="315"/>
    </location>
</feature>
<feature type="active site" description="Nucleophile" evidence="1">
    <location>
        <position position="133"/>
    </location>
</feature>
<feature type="binding site" evidence="1">
    <location>
        <begin position="46"/>
        <end position="47"/>
    </location>
    <ligand>
        <name>FMN</name>
        <dbReference type="ChEBI" id="CHEBI:58210"/>
    </ligand>
</feature>
<feature type="binding site" evidence="1">
    <location>
        <position position="46"/>
    </location>
    <ligand>
        <name>substrate</name>
    </ligand>
</feature>
<feature type="binding site" evidence="1">
    <location>
        <begin position="70"/>
        <end position="74"/>
    </location>
    <ligand>
        <name>substrate</name>
    </ligand>
</feature>
<feature type="binding site" evidence="1">
    <location>
        <position position="130"/>
    </location>
    <ligand>
        <name>FMN</name>
        <dbReference type="ChEBI" id="CHEBI:58210"/>
    </ligand>
</feature>
<feature type="binding site" evidence="1">
    <location>
        <position position="130"/>
    </location>
    <ligand>
        <name>substrate</name>
    </ligand>
</feature>
<feature type="binding site" evidence="1">
    <location>
        <position position="167"/>
    </location>
    <ligand>
        <name>FMN</name>
        <dbReference type="ChEBI" id="CHEBI:58210"/>
    </ligand>
</feature>
<feature type="binding site" evidence="1">
    <location>
        <position position="195"/>
    </location>
    <ligand>
        <name>FMN</name>
        <dbReference type="ChEBI" id="CHEBI:58210"/>
    </ligand>
</feature>
<feature type="binding site" evidence="1">
    <location>
        <begin position="196"/>
        <end position="197"/>
    </location>
    <ligand>
        <name>substrate</name>
    </ligand>
</feature>
<feature type="binding site" evidence="1">
    <location>
        <position position="224"/>
    </location>
    <ligand>
        <name>FMN</name>
        <dbReference type="ChEBI" id="CHEBI:58210"/>
    </ligand>
</feature>
<feature type="binding site" evidence="1">
    <location>
        <begin position="252"/>
        <end position="253"/>
    </location>
    <ligand>
        <name>FMN</name>
        <dbReference type="ChEBI" id="CHEBI:58210"/>
    </ligand>
</feature>
<feature type="binding site" evidence="1">
    <location>
        <begin position="274"/>
        <end position="275"/>
    </location>
    <ligand>
        <name>FMN</name>
        <dbReference type="ChEBI" id="CHEBI:58210"/>
    </ligand>
</feature>
<keyword id="KW-0963">Cytoplasm</keyword>
<keyword id="KW-0285">Flavoprotein</keyword>
<keyword id="KW-0288">FMN</keyword>
<keyword id="KW-0560">Oxidoreductase</keyword>
<keyword id="KW-0665">Pyrimidine biosynthesis</keyword>
<keyword id="KW-1185">Reference proteome</keyword>
<accession>Q7Z895</accession>
<evidence type="ECO:0000250" key="1"/>
<evidence type="ECO:0000305" key="2"/>
<gene>
    <name type="primary">URA1</name>
    <name type="ordered locus">KLLA0C19360g</name>
</gene>